<dbReference type="EC" id="4.1.1.23" evidence="1"/>
<dbReference type="EMBL" id="CP000075">
    <property type="protein sequence ID" value="AAY36883.1"/>
    <property type="status" value="ALT_INIT"/>
    <property type="molecule type" value="Genomic_DNA"/>
</dbReference>
<dbReference type="RefSeq" id="WP_024643169.1">
    <property type="nucleotide sequence ID" value="NC_007005.1"/>
</dbReference>
<dbReference type="RefSeq" id="YP_234921.1">
    <property type="nucleotide sequence ID" value="NC_007005.1"/>
</dbReference>
<dbReference type="SMR" id="Q4ZVD9"/>
<dbReference type="STRING" id="205918.Psyr_1836"/>
<dbReference type="KEGG" id="psb:Psyr_1836"/>
<dbReference type="PATRIC" id="fig|205918.7.peg.1880"/>
<dbReference type="eggNOG" id="COG0284">
    <property type="taxonomic scope" value="Bacteria"/>
</dbReference>
<dbReference type="HOGENOM" id="CLU_067069_0_0_6"/>
<dbReference type="OrthoDB" id="9806203at2"/>
<dbReference type="UniPathway" id="UPA00070">
    <property type="reaction ID" value="UER00120"/>
</dbReference>
<dbReference type="Proteomes" id="UP000000426">
    <property type="component" value="Chromosome"/>
</dbReference>
<dbReference type="GO" id="GO:0005829">
    <property type="term" value="C:cytosol"/>
    <property type="evidence" value="ECO:0007669"/>
    <property type="project" value="TreeGrafter"/>
</dbReference>
<dbReference type="GO" id="GO:0004590">
    <property type="term" value="F:orotidine-5'-phosphate decarboxylase activity"/>
    <property type="evidence" value="ECO:0007669"/>
    <property type="project" value="UniProtKB-UniRule"/>
</dbReference>
<dbReference type="GO" id="GO:0006207">
    <property type="term" value="P:'de novo' pyrimidine nucleobase biosynthetic process"/>
    <property type="evidence" value="ECO:0007669"/>
    <property type="project" value="InterPro"/>
</dbReference>
<dbReference type="GO" id="GO:0044205">
    <property type="term" value="P:'de novo' UMP biosynthetic process"/>
    <property type="evidence" value="ECO:0007669"/>
    <property type="project" value="UniProtKB-UniRule"/>
</dbReference>
<dbReference type="CDD" id="cd04725">
    <property type="entry name" value="OMP_decarboxylase_like"/>
    <property type="match status" value="1"/>
</dbReference>
<dbReference type="FunFam" id="3.20.20.70:FF:000015">
    <property type="entry name" value="Orotidine 5'-phosphate decarboxylase"/>
    <property type="match status" value="1"/>
</dbReference>
<dbReference type="Gene3D" id="3.20.20.70">
    <property type="entry name" value="Aldolase class I"/>
    <property type="match status" value="1"/>
</dbReference>
<dbReference type="HAMAP" id="MF_01200_B">
    <property type="entry name" value="OMPdecase_type1_B"/>
    <property type="match status" value="1"/>
</dbReference>
<dbReference type="InterPro" id="IPR013785">
    <property type="entry name" value="Aldolase_TIM"/>
</dbReference>
<dbReference type="InterPro" id="IPR014732">
    <property type="entry name" value="OMPdecase"/>
</dbReference>
<dbReference type="InterPro" id="IPR018089">
    <property type="entry name" value="OMPdecase_AS"/>
</dbReference>
<dbReference type="InterPro" id="IPR047596">
    <property type="entry name" value="OMPdecase_bac"/>
</dbReference>
<dbReference type="InterPro" id="IPR001754">
    <property type="entry name" value="OMPdeCOase_dom"/>
</dbReference>
<dbReference type="InterPro" id="IPR011060">
    <property type="entry name" value="RibuloseP-bd_barrel"/>
</dbReference>
<dbReference type="NCBIfam" id="NF001273">
    <property type="entry name" value="PRK00230.1"/>
    <property type="match status" value="1"/>
</dbReference>
<dbReference type="NCBIfam" id="TIGR01740">
    <property type="entry name" value="pyrF"/>
    <property type="match status" value="1"/>
</dbReference>
<dbReference type="PANTHER" id="PTHR32119">
    <property type="entry name" value="OROTIDINE 5'-PHOSPHATE DECARBOXYLASE"/>
    <property type="match status" value="1"/>
</dbReference>
<dbReference type="PANTHER" id="PTHR32119:SF2">
    <property type="entry name" value="OROTIDINE 5'-PHOSPHATE DECARBOXYLASE"/>
    <property type="match status" value="1"/>
</dbReference>
<dbReference type="Pfam" id="PF00215">
    <property type="entry name" value="OMPdecase"/>
    <property type="match status" value="1"/>
</dbReference>
<dbReference type="SMART" id="SM00934">
    <property type="entry name" value="OMPdecase"/>
    <property type="match status" value="1"/>
</dbReference>
<dbReference type="SUPFAM" id="SSF51366">
    <property type="entry name" value="Ribulose-phoshate binding barrel"/>
    <property type="match status" value="1"/>
</dbReference>
<dbReference type="PROSITE" id="PS00156">
    <property type="entry name" value="OMPDECASE"/>
    <property type="match status" value="1"/>
</dbReference>
<comment type="function">
    <text evidence="1">Catalyzes the decarboxylation of orotidine 5'-monophosphate (OMP) to uridine 5'-monophosphate (UMP).</text>
</comment>
<comment type="catalytic activity">
    <reaction evidence="1">
        <text>orotidine 5'-phosphate + H(+) = UMP + CO2</text>
        <dbReference type="Rhea" id="RHEA:11596"/>
        <dbReference type="ChEBI" id="CHEBI:15378"/>
        <dbReference type="ChEBI" id="CHEBI:16526"/>
        <dbReference type="ChEBI" id="CHEBI:57538"/>
        <dbReference type="ChEBI" id="CHEBI:57865"/>
        <dbReference type="EC" id="4.1.1.23"/>
    </reaction>
</comment>
<comment type="pathway">
    <text evidence="1">Pyrimidine metabolism; UMP biosynthesis via de novo pathway; UMP from orotate: step 2/2.</text>
</comment>
<comment type="subunit">
    <text evidence="1">Homodimer.</text>
</comment>
<comment type="similarity">
    <text evidence="1">Belongs to the OMP decarboxylase family. Type 1 subfamily.</text>
</comment>
<comment type="sequence caution" evidence="2">
    <conflict type="erroneous initiation">
        <sequence resource="EMBL-CDS" id="AAY36883"/>
    </conflict>
</comment>
<feature type="chain" id="PRO_0000241892" description="Orotidine 5'-phosphate decarboxylase">
    <location>
        <begin position="1"/>
        <end position="232"/>
    </location>
</feature>
<feature type="active site" description="Proton donor" evidence="1">
    <location>
        <position position="64"/>
    </location>
</feature>
<feature type="binding site" evidence="1">
    <location>
        <position position="13"/>
    </location>
    <ligand>
        <name>substrate</name>
    </ligand>
</feature>
<feature type="binding site" evidence="1">
    <location>
        <position position="35"/>
    </location>
    <ligand>
        <name>substrate</name>
    </ligand>
</feature>
<feature type="binding site" evidence="1">
    <location>
        <begin position="62"/>
        <end position="71"/>
    </location>
    <ligand>
        <name>substrate</name>
    </ligand>
</feature>
<feature type="binding site" evidence="1">
    <location>
        <position position="122"/>
    </location>
    <ligand>
        <name>substrate</name>
    </ligand>
</feature>
<feature type="binding site" evidence="1">
    <location>
        <position position="182"/>
    </location>
    <ligand>
        <name>substrate</name>
    </ligand>
</feature>
<feature type="binding site" evidence="1">
    <location>
        <position position="191"/>
    </location>
    <ligand>
        <name>substrate</name>
    </ligand>
</feature>
<feature type="binding site" evidence="1">
    <location>
        <position position="211"/>
    </location>
    <ligand>
        <name>substrate</name>
    </ligand>
</feature>
<feature type="binding site" evidence="1">
    <location>
        <position position="212"/>
    </location>
    <ligand>
        <name>substrate</name>
    </ligand>
</feature>
<sequence length="232" mass="24627">MSACQTPVIVALDFPTREAALRLADQLDPKLCRVKVGKELFTSCAADIVETLRHRGFEVFLDLKFHDIPNTTAMAVKAAAEMGVWMVNVHCSGGLRMMAACREVLEQRTGPQPLLIGVTVLTSMEREDLAGIGLDIDPQVQVLRLAALAGKAGMDGLVCSALEAQALKAAHPSLQLVTPGIRPAGSAQDDQRRILTPRQALDAGSDYLVIGRPISQAADPAKALAAVVAELA</sequence>
<reference key="1">
    <citation type="journal article" date="2005" name="Proc. Natl. Acad. Sci. U.S.A.">
        <title>Comparison of the complete genome sequences of Pseudomonas syringae pv. syringae B728a and pv. tomato DC3000.</title>
        <authorList>
            <person name="Feil H."/>
            <person name="Feil W.S."/>
            <person name="Chain P."/>
            <person name="Larimer F."/>
            <person name="Dibartolo G."/>
            <person name="Copeland A."/>
            <person name="Lykidis A."/>
            <person name="Trong S."/>
            <person name="Nolan M."/>
            <person name="Goltsman E."/>
            <person name="Thiel J."/>
            <person name="Malfatti S."/>
            <person name="Loper J.E."/>
            <person name="Lapidus A."/>
            <person name="Detter J.C."/>
            <person name="Land M."/>
            <person name="Richardson P.M."/>
            <person name="Kyrpides N.C."/>
            <person name="Ivanova N."/>
            <person name="Lindow S.E."/>
        </authorList>
    </citation>
    <scope>NUCLEOTIDE SEQUENCE [LARGE SCALE GENOMIC DNA]</scope>
    <source>
        <strain>B728a</strain>
    </source>
</reference>
<protein>
    <recommendedName>
        <fullName evidence="1">Orotidine 5'-phosphate decarboxylase</fullName>
        <ecNumber evidence="1">4.1.1.23</ecNumber>
    </recommendedName>
    <alternativeName>
        <fullName evidence="1">OMP decarboxylase</fullName>
        <shortName evidence="1">OMPDCase</shortName>
        <shortName evidence="1">OMPdecase</shortName>
    </alternativeName>
</protein>
<keyword id="KW-0210">Decarboxylase</keyword>
<keyword id="KW-0456">Lyase</keyword>
<keyword id="KW-0665">Pyrimidine biosynthesis</keyword>
<accession>Q4ZVD9</accession>
<proteinExistence type="inferred from homology"/>
<name>PYRF_PSEU2</name>
<evidence type="ECO:0000255" key="1">
    <source>
        <dbReference type="HAMAP-Rule" id="MF_01200"/>
    </source>
</evidence>
<evidence type="ECO:0000305" key="2"/>
<organism>
    <name type="scientific">Pseudomonas syringae pv. syringae (strain B728a)</name>
    <dbReference type="NCBI Taxonomy" id="205918"/>
    <lineage>
        <taxon>Bacteria</taxon>
        <taxon>Pseudomonadati</taxon>
        <taxon>Pseudomonadota</taxon>
        <taxon>Gammaproteobacteria</taxon>
        <taxon>Pseudomonadales</taxon>
        <taxon>Pseudomonadaceae</taxon>
        <taxon>Pseudomonas</taxon>
        <taxon>Pseudomonas syringae</taxon>
    </lineage>
</organism>
<gene>
    <name evidence="1" type="primary">pyrF</name>
    <name type="ordered locus">Psyr_1836</name>
</gene>